<evidence type="ECO:0000255" key="1">
    <source>
        <dbReference type="HAMAP-Rule" id="MF_00168"/>
    </source>
</evidence>
<protein>
    <recommendedName>
        <fullName evidence="1">Queuine tRNA-ribosyltransferase</fullName>
        <ecNumber evidence="1">2.4.2.29</ecNumber>
    </recommendedName>
    <alternativeName>
        <fullName evidence="1">Guanine insertion enzyme</fullName>
    </alternativeName>
    <alternativeName>
        <fullName evidence="1">tRNA-guanine transglycosylase</fullName>
    </alternativeName>
</protein>
<keyword id="KW-0328">Glycosyltransferase</keyword>
<keyword id="KW-0479">Metal-binding</keyword>
<keyword id="KW-0671">Queuosine biosynthesis</keyword>
<keyword id="KW-0808">Transferase</keyword>
<keyword id="KW-0819">tRNA processing</keyword>
<keyword id="KW-0862">Zinc</keyword>
<proteinExistence type="inferred from homology"/>
<comment type="function">
    <text evidence="1">Catalyzes the base-exchange of a guanine (G) residue with the queuine precursor 7-aminomethyl-7-deazaguanine (PreQ1) at position 34 (anticodon wobble position) in tRNAs with GU(N) anticodons (tRNA-Asp, -Asn, -His and -Tyr). Catalysis occurs through a double-displacement mechanism. The nucleophile active site attacks the C1' of nucleotide 34 to detach the guanine base from the RNA, forming a covalent enzyme-RNA intermediate. The proton acceptor active site deprotonates the incoming PreQ1, allowing a nucleophilic attack on the C1' of the ribose to form the product. After dissociation, two additional enzymatic reactions on the tRNA convert PreQ1 to queuine (Q), resulting in the hypermodified nucleoside queuosine (7-(((4,5-cis-dihydroxy-2-cyclopenten-1-yl)amino)methyl)-7-deazaguanosine).</text>
</comment>
<comment type="catalytic activity">
    <reaction evidence="1">
        <text>7-aminomethyl-7-carbaguanine + guanosine(34) in tRNA = 7-aminomethyl-7-carbaguanosine(34) in tRNA + guanine</text>
        <dbReference type="Rhea" id="RHEA:24104"/>
        <dbReference type="Rhea" id="RHEA-COMP:10341"/>
        <dbReference type="Rhea" id="RHEA-COMP:10342"/>
        <dbReference type="ChEBI" id="CHEBI:16235"/>
        <dbReference type="ChEBI" id="CHEBI:58703"/>
        <dbReference type="ChEBI" id="CHEBI:74269"/>
        <dbReference type="ChEBI" id="CHEBI:82833"/>
        <dbReference type="EC" id="2.4.2.29"/>
    </reaction>
</comment>
<comment type="cofactor">
    <cofactor evidence="1">
        <name>Zn(2+)</name>
        <dbReference type="ChEBI" id="CHEBI:29105"/>
    </cofactor>
    <text evidence="1">Binds 1 zinc ion per subunit.</text>
</comment>
<comment type="pathway">
    <text evidence="1">tRNA modification; tRNA-queuosine biosynthesis.</text>
</comment>
<comment type="subunit">
    <text evidence="1">Homodimer. Within each dimer, one monomer is responsible for RNA recognition and catalysis, while the other monomer binds to the replacement base PreQ1.</text>
</comment>
<comment type="similarity">
    <text evidence="1">Belongs to the queuine tRNA-ribosyltransferase family.</text>
</comment>
<feature type="chain" id="PRO_1000197988" description="Queuine tRNA-ribosyltransferase">
    <location>
        <begin position="1"/>
        <end position="370"/>
    </location>
</feature>
<feature type="region of interest" description="RNA binding" evidence="1">
    <location>
        <begin position="245"/>
        <end position="251"/>
    </location>
</feature>
<feature type="region of interest" description="RNA binding; important for wobble base 34 recognition" evidence="1">
    <location>
        <begin position="269"/>
        <end position="273"/>
    </location>
</feature>
<feature type="active site" description="Proton acceptor" evidence="1">
    <location>
        <position position="89"/>
    </location>
</feature>
<feature type="active site" description="Nucleophile" evidence="1">
    <location>
        <position position="264"/>
    </location>
</feature>
<feature type="binding site" evidence="1">
    <location>
        <begin position="89"/>
        <end position="93"/>
    </location>
    <ligand>
        <name>substrate</name>
    </ligand>
</feature>
<feature type="binding site" evidence="1">
    <location>
        <position position="143"/>
    </location>
    <ligand>
        <name>substrate</name>
    </ligand>
</feature>
<feature type="binding site" evidence="1">
    <location>
        <position position="214"/>
    </location>
    <ligand>
        <name>substrate</name>
    </ligand>
</feature>
<feature type="binding site" evidence="1">
    <location>
        <position position="302"/>
    </location>
    <ligand>
        <name>Zn(2+)</name>
        <dbReference type="ChEBI" id="CHEBI:29105"/>
    </ligand>
</feature>
<feature type="binding site" evidence="1">
    <location>
        <position position="304"/>
    </location>
    <ligand>
        <name>Zn(2+)</name>
        <dbReference type="ChEBI" id="CHEBI:29105"/>
    </ligand>
</feature>
<feature type="binding site" evidence="1">
    <location>
        <position position="307"/>
    </location>
    <ligand>
        <name>Zn(2+)</name>
        <dbReference type="ChEBI" id="CHEBI:29105"/>
    </ligand>
</feature>
<feature type="binding site" evidence="1">
    <location>
        <position position="333"/>
    </location>
    <ligand>
        <name>Zn(2+)</name>
        <dbReference type="ChEBI" id="CHEBI:29105"/>
    </ligand>
</feature>
<accession>B8D8T4</accession>
<sequence>MNFEVLYQDNNARCGVFNFNQEIIETPVFMPVGTYGAVKSISTEEIKNTGSRIILSNAFHLYFRPGLEIIKLHGNLHNFMNWSGPILTDSGGFQVFSLSRFCKVNEEGVIFQNHIDGKKTFLTPKISMKIQSDLGSNIVMIFDQCIEYNQNWEKTKNAMERSLYWAKKSRIYFDSYKNKNSLFGIIHGGIYPSLRDISLQELIKIDFDGYALGGLAVGEPKIEMYKLLDHICPQIPKNKPRYLMGVGKPEDLIEGVRRGVDMFDCVIPTRNARNGHLFVTNGVIKIRNKKYKKDLSCLDKTCVCYTCRYYSRSYLHHLDACNEILGARLNTIHNLHYYQTLMSNIRNSIKNNTFEQFSLNFYKQKNKIDF</sequence>
<gene>
    <name evidence="1" type="primary">tgt</name>
    <name type="ordered locus">BUAP5A_131</name>
</gene>
<name>TGT_BUCA5</name>
<organism>
    <name type="scientific">Buchnera aphidicola subsp. Acyrthosiphon pisum (strain 5A)</name>
    <dbReference type="NCBI Taxonomy" id="563178"/>
    <lineage>
        <taxon>Bacteria</taxon>
        <taxon>Pseudomonadati</taxon>
        <taxon>Pseudomonadota</taxon>
        <taxon>Gammaproteobacteria</taxon>
        <taxon>Enterobacterales</taxon>
        <taxon>Erwiniaceae</taxon>
        <taxon>Buchnera</taxon>
    </lineage>
</organism>
<dbReference type="EC" id="2.4.2.29" evidence="1"/>
<dbReference type="EMBL" id="CP001161">
    <property type="protein sequence ID" value="ACL30506.1"/>
    <property type="molecule type" value="Genomic_DNA"/>
</dbReference>
<dbReference type="RefSeq" id="WP_009874089.1">
    <property type="nucleotide sequence ID" value="NC_011833.1"/>
</dbReference>
<dbReference type="SMR" id="B8D8T4"/>
<dbReference type="KEGG" id="bap:BUAP5A_131"/>
<dbReference type="HOGENOM" id="CLU_022060_0_1_6"/>
<dbReference type="OrthoDB" id="9805417at2"/>
<dbReference type="UniPathway" id="UPA00392"/>
<dbReference type="Proteomes" id="UP000006904">
    <property type="component" value="Chromosome"/>
</dbReference>
<dbReference type="GO" id="GO:0005829">
    <property type="term" value="C:cytosol"/>
    <property type="evidence" value="ECO:0007669"/>
    <property type="project" value="TreeGrafter"/>
</dbReference>
<dbReference type="GO" id="GO:0046872">
    <property type="term" value="F:metal ion binding"/>
    <property type="evidence" value="ECO:0007669"/>
    <property type="project" value="UniProtKB-KW"/>
</dbReference>
<dbReference type="GO" id="GO:0008479">
    <property type="term" value="F:tRNA-guanosine(34) queuine transglycosylase activity"/>
    <property type="evidence" value="ECO:0007669"/>
    <property type="project" value="UniProtKB-UniRule"/>
</dbReference>
<dbReference type="GO" id="GO:0008616">
    <property type="term" value="P:queuosine biosynthetic process"/>
    <property type="evidence" value="ECO:0007669"/>
    <property type="project" value="UniProtKB-UniRule"/>
</dbReference>
<dbReference type="GO" id="GO:0002099">
    <property type="term" value="P:tRNA wobble guanine modification"/>
    <property type="evidence" value="ECO:0007669"/>
    <property type="project" value="TreeGrafter"/>
</dbReference>
<dbReference type="GO" id="GO:0101030">
    <property type="term" value="P:tRNA-guanine transglycosylation"/>
    <property type="evidence" value="ECO:0007669"/>
    <property type="project" value="InterPro"/>
</dbReference>
<dbReference type="FunFam" id="3.20.20.105:FF:000001">
    <property type="entry name" value="Queuine tRNA-ribosyltransferase"/>
    <property type="match status" value="1"/>
</dbReference>
<dbReference type="Gene3D" id="3.20.20.105">
    <property type="entry name" value="Queuine tRNA-ribosyltransferase-like"/>
    <property type="match status" value="1"/>
</dbReference>
<dbReference type="HAMAP" id="MF_00168">
    <property type="entry name" value="Q_tRNA_Tgt"/>
    <property type="match status" value="1"/>
</dbReference>
<dbReference type="InterPro" id="IPR050076">
    <property type="entry name" value="ArchSynthase1/Queuine_TRR"/>
</dbReference>
<dbReference type="InterPro" id="IPR004803">
    <property type="entry name" value="TGT"/>
</dbReference>
<dbReference type="InterPro" id="IPR036511">
    <property type="entry name" value="TGT-like_sf"/>
</dbReference>
<dbReference type="InterPro" id="IPR002616">
    <property type="entry name" value="tRNA_ribo_trans-like"/>
</dbReference>
<dbReference type="NCBIfam" id="TIGR00430">
    <property type="entry name" value="Q_tRNA_tgt"/>
    <property type="match status" value="1"/>
</dbReference>
<dbReference type="NCBIfam" id="TIGR00449">
    <property type="entry name" value="tgt_general"/>
    <property type="match status" value="1"/>
</dbReference>
<dbReference type="PANTHER" id="PTHR46499">
    <property type="entry name" value="QUEUINE TRNA-RIBOSYLTRANSFERASE"/>
    <property type="match status" value="1"/>
</dbReference>
<dbReference type="PANTHER" id="PTHR46499:SF1">
    <property type="entry name" value="QUEUINE TRNA-RIBOSYLTRANSFERASE"/>
    <property type="match status" value="1"/>
</dbReference>
<dbReference type="Pfam" id="PF01702">
    <property type="entry name" value="TGT"/>
    <property type="match status" value="1"/>
</dbReference>
<dbReference type="SUPFAM" id="SSF51713">
    <property type="entry name" value="tRNA-guanine transglycosylase"/>
    <property type="match status" value="1"/>
</dbReference>
<reference key="1">
    <citation type="journal article" date="2009" name="Science">
        <title>The dynamics and time scale of ongoing genomic erosion in symbiotic bacteria.</title>
        <authorList>
            <person name="Moran N.A."/>
            <person name="McLaughlin H.J."/>
            <person name="Sorek R."/>
        </authorList>
    </citation>
    <scope>NUCLEOTIDE SEQUENCE [LARGE SCALE GENOMIC DNA]</scope>
    <source>
        <strain>5A</strain>
    </source>
</reference>